<feature type="initiator methionine" description="Removed" evidence="2">
    <location>
        <position position="1"/>
    </location>
</feature>
<feature type="chain" id="PRO_0000296949" description="Protein FAM136A">
    <location>
        <begin position="2"/>
        <end position="138"/>
    </location>
</feature>
<feature type="modified residue" description="N-acetylalanine" evidence="2">
    <location>
        <position position="2"/>
    </location>
</feature>
<feature type="modified residue" description="Phosphothreonine" evidence="1">
    <location>
        <position position="124"/>
    </location>
</feature>
<feature type="modified residue" description="Phosphothreonine" evidence="1">
    <location>
        <position position="126"/>
    </location>
</feature>
<proteinExistence type="evidence at transcript level"/>
<organism>
    <name type="scientific">Bos taurus</name>
    <name type="common">Bovine</name>
    <dbReference type="NCBI Taxonomy" id="9913"/>
    <lineage>
        <taxon>Eukaryota</taxon>
        <taxon>Metazoa</taxon>
        <taxon>Chordata</taxon>
        <taxon>Craniata</taxon>
        <taxon>Vertebrata</taxon>
        <taxon>Euteleostomi</taxon>
        <taxon>Mammalia</taxon>
        <taxon>Eutheria</taxon>
        <taxon>Laurasiatheria</taxon>
        <taxon>Artiodactyla</taxon>
        <taxon>Ruminantia</taxon>
        <taxon>Pecora</taxon>
        <taxon>Bovidae</taxon>
        <taxon>Bovinae</taxon>
        <taxon>Bos</taxon>
    </lineage>
</organism>
<reference key="1">
    <citation type="submission" date="2005-09" db="EMBL/GenBank/DDBJ databases">
        <authorList>
            <consortium name="NIH - Mammalian Gene Collection (MGC) project"/>
        </authorList>
    </citation>
    <scope>NUCLEOTIDE SEQUENCE [LARGE SCALE MRNA]</scope>
    <source>
        <strain>Crossbred X Angus</strain>
        <tissue>Ileum</tissue>
    </source>
</reference>
<sequence>MAELQQLRVQEAVDSMVKSLERENIRKMQGLMFRCSAACCEESQASMQQVHQCIERCHAPLAQAQALVTSELEKFQDRLARCTMYCNDKAKDSIDAGSKELHVKRQLETCVTKCVDDHMNLIPTMTRKMKESLSSIGK</sequence>
<accession>Q2HJI3</accession>
<dbReference type="EMBL" id="BC105349">
    <property type="protein sequence ID" value="AAI05350.1"/>
    <property type="molecule type" value="mRNA"/>
</dbReference>
<dbReference type="RefSeq" id="NP_001040053.1">
    <property type="nucleotide sequence ID" value="NM_001046588.2"/>
</dbReference>
<dbReference type="SMR" id="Q2HJI3"/>
<dbReference type="FunCoup" id="Q2HJI3">
    <property type="interactions" value="2696"/>
</dbReference>
<dbReference type="STRING" id="9913.ENSBTAP00000011436"/>
<dbReference type="PaxDb" id="9913-ENSBTAP00000011436"/>
<dbReference type="GeneID" id="616997"/>
<dbReference type="KEGG" id="bta:616997"/>
<dbReference type="CTD" id="84908"/>
<dbReference type="VEuPathDB" id="HostDB:ENSBTAG00000008674"/>
<dbReference type="eggNOG" id="KOG3377">
    <property type="taxonomic scope" value="Eukaryota"/>
</dbReference>
<dbReference type="HOGENOM" id="CLU_110442_3_0_1"/>
<dbReference type="InParanoid" id="Q2HJI3"/>
<dbReference type="OMA" id="EMEGCVV"/>
<dbReference type="OrthoDB" id="9975421at2759"/>
<dbReference type="TreeFam" id="TF315119"/>
<dbReference type="Proteomes" id="UP000009136">
    <property type="component" value="Chromosome 11"/>
</dbReference>
<dbReference type="Bgee" id="ENSBTAG00000008674">
    <property type="expression patterns" value="Expressed in caput epididymis and 106 other cell types or tissues"/>
</dbReference>
<dbReference type="GO" id="GO:0005737">
    <property type="term" value="C:cytoplasm"/>
    <property type="evidence" value="ECO:0000318"/>
    <property type="project" value="GO_Central"/>
</dbReference>
<dbReference type="InterPro" id="IPR008560">
    <property type="entry name" value="DUF842_euk"/>
</dbReference>
<dbReference type="PANTHER" id="PTHR21096">
    <property type="entry name" value="PROTEIN FAM136A"/>
    <property type="match status" value="1"/>
</dbReference>
<dbReference type="PANTHER" id="PTHR21096:SF0">
    <property type="entry name" value="PROTEIN FAM136A"/>
    <property type="match status" value="1"/>
</dbReference>
<dbReference type="Pfam" id="PF05811">
    <property type="entry name" value="DUF842"/>
    <property type="match status" value="1"/>
</dbReference>
<gene>
    <name type="primary">FAM136A</name>
</gene>
<keyword id="KW-0007">Acetylation</keyword>
<keyword id="KW-0597">Phosphoprotein</keyword>
<keyword id="KW-1185">Reference proteome</keyword>
<comment type="similarity">
    <text evidence="3">Belongs to the FAM136 family.</text>
</comment>
<evidence type="ECO:0000250" key="1">
    <source>
        <dbReference type="UniProtKB" id="B0BN94"/>
    </source>
</evidence>
<evidence type="ECO:0000250" key="2">
    <source>
        <dbReference type="UniProtKB" id="Q96C01"/>
    </source>
</evidence>
<evidence type="ECO:0000305" key="3"/>
<protein>
    <recommendedName>
        <fullName>Protein FAM136A</fullName>
    </recommendedName>
</protein>
<name>F136A_BOVIN</name>